<proteinExistence type="inferred from homology"/>
<comment type="function">
    <text evidence="1">Binds directly to 23S ribosomal RNA and is necessary for the in vitro assembly process of the 50S ribosomal subunit. It is not involved in the protein synthesizing functions of that subunit.</text>
</comment>
<comment type="similarity">
    <text evidence="1">Belongs to the bacterial ribosomal protein bL20 family.</text>
</comment>
<evidence type="ECO:0000255" key="1">
    <source>
        <dbReference type="HAMAP-Rule" id="MF_00382"/>
    </source>
</evidence>
<evidence type="ECO:0000305" key="2"/>
<gene>
    <name evidence="1" type="primary">rplT</name>
    <name type="ordered locus">DP1425</name>
</gene>
<accession>Q6ANC0</accession>
<sequence>MPRVTRGFKARRRRNRVLKLAKGYRGARSRLFKTATEAVDRALCYAYRDRKQRKRDFRRLWITRINAGAKMNDINYSRFIGGLAKAGIELDRKVLANLAVLDAPAFTKLSVIAKEANA</sequence>
<feature type="chain" id="PRO_0000177154" description="Large ribosomal subunit protein bL20">
    <location>
        <begin position="1"/>
        <end position="118"/>
    </location>
</feature>
<keyword id="KW-1185">Reference proteome</keyword>
<keyword id="KW-0687">Ribonucleoprotein</keyword>
<keyword id="KW-0689">Ribosomal protein</keyword>
<keyword id="KW-0694">RNA-binding</keyword>
<keyword id="KW-0699">rRNA-binding</keyword>
<organism>
    <name type="scientific">Desulfotalea psychrophila (strain LSv54 / DSM 12343)</name>
    <dbReference type="NCBI Taxonomy" id="177439"/>
    <lineage>
        <taxon>Bacteria</taxon>
        <taxon>Pseudomonadati</taxon>
        <taxon>Thermodesulfobacteriota</taxon>
        <taxon>Desulfobulbia</taxon>
        <taxon>Desulfobulbales</taxon>
        <taxon>Desulfocapsaceae</taxon>
        <taxon>Desulfotalea</taxon>
    </lineage>
</organism>
<protein>
    <recommendedName>
        <fullName evidence="1">Large ribosomal subunit protein bL20</fullName>
    </recommendedName>
    <alternativeName>
        <fullName evidence="2">50S ribosomal protein L20</fullName>
    </alternativeName>
</protein>
<dbReference type="EMBL" id="CR522870">
    <property type="protein sequence ID" value="CAG36154.1"/>
    <property type="molecule type" value="Genomic_DNA"/>
</dbReference>
<dbReference type="RefSeq" id="WP_011188666.1">
    <property type="nucleotide sequence ID" value="NC_006138.1"/>
</dbReference>
<dbReference type="SMR" id="Q6ANC0"/>
<dbReference type="STRING" id="177439.DP1425"/>
<dbReference type="KEGG" id="dps:DP1425"/>
<dbReference type="eggNOG" id="COG0292">
    <property type="taxonomic scope" value="Bacteria"/>
</dbReference>
<dbReference type="HOGENOM" id="CLU_123265_0_1_7"/>
<dbReference type="OrthoDB" id="9808966at2"/>
<dbReference type="Proteomes" id="UP000000602">
    <property type="component" value="Chromosome"/>
</dbReference>
<dbReference type="GO" id="GO:1990904">
    <property type="term" value="C:ribonucleoprotein complex"/>
    <property type="evidence" value="ECO:0007669"/>
    <property type="project" value="UniProtKB-KW"/>
</dbReference>
<dbReference type="GO" id="GO:0005840">
    <property type="term" value="C:ribosome"/>
    <property type="evidence" value="ECO:0007669"/>
    <property type="project" value="UniProtKB-KW"/>
</dbReference>
<dbReference type="GO" id="GO:0019843">
    <property type="term" value="F:rRNA binding"/>
    <property type="evidence" value="ECO:0007669"/>
    <property type="project" value="UniProtKB-UniRule"/>
</dbReference>
<dbReference type="GO" id="GO:0003735">
    <property type="term" value="F:structural constituent of ribosome"/>
    <property type="evidence" value="ECO:0007669"/>
    <property type="project" value="InterPro"/>
</dbReference>
<dbReference type="GO" id="GO:0000027">
    <property type="term" value="P:ribosomal large subunit assembly"/>
    <property type="evidence" value="ECO:0007669"/>
    <property type="project" value="UniProtKB-UniRule"/>
</dbReference>
<dbReference type="GO" id="GO:0006412">
    <property type="term" value="P:translation"/>
    <property type="evidence" value="ECO:0007669"/>
    <property type="project" value="InterPro"/>
</dbReference>
<dbReference type="CDD" id="cd07026">
    <property type="entry name" value="Ribosomal_L20"/>
    <property type="match status" value="1"/>
</dbReference>
<dbReference type="FunFam" id="1.10.1900.20:FF:000001">
    <property type="entry name" value="50S ribosomal protein L20"/>
    <property type="match status" value="1"/>
</dbReference>
<dbReference type="Gene3D" id="6.10.160.10">
    <property type="match status" value="1"/>
</dbReference>
<dbReference type="Gene3D" id="1.10.1900.20">
    <property type="entry name" value="Ribosomal protein L20"/>
    <property type="match status" value="1"/>
</dbReference>
<dbReference type="HAMAP" id="MF_00382">
    <property type="entry name" value="Ribosomal_bL20"/>
    <property type="match status" value="1"/>
</dbReference>
<dbReference type="InterPro" id="IPR005813">
    <property type="entry name" value="Ribosomal_bL20"/>
</dbReference>
<dbReference type="InterPro" id="IPR049946">
    <property type="entry name" value="RIBOSOMAL_L20_CS"/>
</dbReference>
<dbReference type="InterPro" id="IPR035566">
    <property type="entry name" value="Ribosomal_protein_bL20_C"/>
</dbReference>
<dbReference type="NCBIfam" id="TIGR01032">
    <property type="entry name" value="rplT_bact"/>
    <property type="match status" value="1"/>
</dbReference>
<dbReference type="PANTHER" id="PTHR10986">
    <property type="entry name" value="39S RIBOSOMAL PROTEIN L20"/>
    <property type="match status" value="1"/>
</dbReference>
<dbReference type="Pfam" id="PF00453">
    <property type="entry name" value="Ribosomal_L20"/>
    <property type="match status" value="1"/>
</dbReference>
<dbReference type="PRINTS" id="PR00062">
    <property type="entry name" value="RIBOSOMALL20"/>
</dbReference>
<dbReference type="SUPFAM" id="SSF74731">
    <property type="entry name" value="Ribosomal protein L20"/>
    <property type="match status" value="1"/>
</dbReference>
<dbReference type="PROSITE" id="PS00937">
    <property type="entry name" value="RIBOSOMAL_L20"/>
    <property type="match status" value="1"/>
</dbReference>
<name>RL20_DESPS</name>
<reference key="1">
    <citation type="journal article" date="2004" name="Environ. Microbiol.">
        <title>The genome of Desulfotalea psychrophila, a sulfate-reducing bacterium from permanently cold Arctic sediments.</title>
        <authorList>
            <person name="Rabus R."/>
            <person name="Ruepp A."/>
            <person name="Frickey T."/>
            <person name="Rattei T."/>
            <person name="Fartmann B."/>
            <person name="Stark M."/>
            <person name="Bauer M."/>
            <person name="Zibat A."/>
            <person name="Lombardot T."/>
            <person name="Becker I."/>
            <person name="Amann J."/>
            <person name="Gellner K."/>
            <person name="Teeling H."/>
            <person name="Leuschner W.D."/>
            <person name="Gloeckner F.-O."/>
            <person name="Lupas A.N."/>
            <person name="Amann R."/>
            <person name="Klenk H.-P."/>
        </authorList>
    </citation>
    <scope>NUCLEOTIDE SEQUENCE [LARGE SCALE GENOMIC DNA]</scope>
    <source>
        <strain>DSM 12343 / LSv54</strain>
    </source>
</reference>